<dbReference type="EC" id="7.2.4.1" evidence="2"/>
<dbReference type="EMBL" id="U87980">
    <property type="protein sequence ID" value="AAC45399.1"/>
    <property type="molecule type" value="Genomic_DNA"/>
</dbReference>
<dbReference type="SMR" id="O06923"/>
<dbReference type="TCDB" id="3.B.1.1.4">
    <property type="family name" value="the na(+)-transporting carboxylic acid decarboxylase (nat-dc) family"/>
</dbReference>
<dbReference type="KEGG" id="ag:AAC45399"/>
<dbReference type="BioCyc" id="MetaCyc:MONOMER-14257"/>
<dbReference type="GO" id="GO:0005886">
    <property type="term" value="C:plasma membrane"/>
    <property type="evidence" value="ECO:0007669"/>
    <property type="project" value="UniProtKB-SubCell"/>
</dbReference>
<dbReference type="GO" id="GO:0015451">
    <property type="term" value="F:decarboxylation-driven active transmembrane transporter activity"/>
    <property type="evidence" value="ECO:0007669"/>
    <property type="project" value="UniProtKB-EC"/>
</dbReference>
<dbReference type="GO" id="GO:0016829">
    <property type="term" value="F:lyase activity"/>
    <property type="evidence" value="ECO:0007669"/>
    <property type="project" value="InterPro"/>
</dbReference>
<dbReference type="GO" id="GO:0006814">
    <property type="term" value="P:sodium ion transport"/>
    <property type="evidence" value="ECO:0007669"/>
    <property type="project" value="InterPro"/>
</dbReference>
<dbReference type="InterPro" id="IPR017558">
    <property type="entry name" value="Malonate_biotin"/>
</dbReference>
<dbReference type="InterPro" id="IPR005661">
    <property type="entry name" value="OadB_MmdB"/>
</dbReference>
<dbReference type="NCBIfam" id="TIGR03136">
    <property type="entry name" value="malonate_biotin"/>
    <property type="match status" value="1"/>
</dbReference>
<dbReference type="NCBIfam" id="TIGR01109">
    <property type="entry name" value="Na_pump_decarbB"/>
    <property type="match status" value="1"/>
</dbReference>
<dbReference type="PANTHER" id="PTHR35806">
    <property type="entry name" value="OXALOACETATE DECARBOXYLASE BETA CHAIN 2"/>
    <property type="match status" value="1"/>
</dbReference>
<dbReference type="PANTHER" id="PTHR35806:SF1">
    <property type="entry name" value="OXALOACETATE DECARBOXYLASE BETA CHAIN 2"/>
    <property type="match status" value="1"/>
</dbReference>
<dbReference type="Pfam" id="PF03977">
    <property type="entry name" value="OAD_beta"/>
    <property type="match status" value="1"/>
</dbReference>
<dbReference type="PIRSF" id="PIRSF015658">
    <property type="entry name" value="MmdB_OadB"/>
    <property type="match status" value="1"/>
</dbReference>
<proteinExistence type="evidence at protein level"/>
<evidence type="ECO:0000255" key="1"/>
<evidence type="ECO:0000269" key="2">
    <source>
    </source>
</evidence>
<evidence type="ECO:0000305" key="3"/>
<name>MADB_MALRU</name>
<protein>
    <recommendedName>
        <fullName>Carboxybiotin decarboxylase</fullName>
        <ecNumber evidence="2">7.2.4.1</ecNumber>
    </recommendedName>
    <alternativeName>
        <fullName>Carboxybiotin protein decarboxylase</fullName>
    </alternativeName>
</protein>
<keyword id="KW-1003">Cell membrane</keyword>
<keyword id="KW-0472">Membrane</keyword>
<keyword id="KW-1278">Translocase</keyword>
<keyword id="KW-0812">Transmembrane</keyword>
<keyword id="KW-1133">Transmembrane helix</keyword>
<reference key="1">
    <citation type="journal article" date="1997" name="Eur. J. Biochem.">
        <title>Sequence of a gene cluster from Malonomonas rubra encoding components of the malonate decarboxylase Na+ pump and evidence for their function.</title>
        <authorList>
            <person name="Berg M."/>
            <person name="Hilbi H."/>
            <person name="Dimroth P."/>
        </authorList>
    </citation>
    <scope>NUCLEOTIDE SEQUENCE [GENOMIC DNA]</scope>
    <scope>CHARACTERIZATION</scope>
</reference>
<reference key="2">
    <citation type="journal article" date="1997" name="Mol. Microbiol.">
        <title>Enzymic and genetic basis for bacterial growth on malonate.</title>
        <authorList>
            <person name="Dimroth P."/>
            <person name="Hilbi H."/>
        </authorList>
    </citation>
    <scope>CATALYTIC ACTIVITY</scope>
</reference>
<accession>O06923</accession>
<gene>
    <name type="primary">madB</name>
</gene>
<feature type="chain" id="PRO_0000424275" description="Carboxybiotin decarboxylase">
    <location>
        <begin position="1"/>
        <end position="401"/>
    </location>
</feature>
<feature type="transmembrane region" description="Helical" evidence="1">
    <location>
        <begin position="20"/>
        <end position="40"/>
    </location>
</feature>
<feature type="transmembrane region" description="Helical" evidence="1">
    <location>
        <begin position="46"/>
        <end position="66"/>
    </location>
</feature>
<feature type="transmembrane region" description="Helical" evidence="1">
    <location>
        <begin position="70"/>
        <end position="90"/>
    </location>
</feature>
<feature type="transmembrane region" description="Helical" evidence="1">
    <location>
        <begin position="107"/>
        <end position="127"/>
    </location>
</feature>
<feature type="transmembrane region" description="Helical" evidence="1">
    <location>
        <begin position="131"/>
        <end position="151"/>
    </location>
</feature>
<feature type="transmembrane region" description="Helical" evidence="1">
    <location>
        <begin position="173"/>
        <end position="193"/>
    </location>
</feature>
<feature type="transmembrane region" description="Helical" evidence="1">
    <location>
        <begin position="244"/>
        <end position="264"/>
    </location>
</feature>
<feature type="transmembrane region" description="Helical" evidence="1">
    <location>
        <begin position="275"/>
        <end position="295"/>
    </location>
</feature>
<feature type="transmembrane region" description="Helical" evidence="1">
    <location>
        <begin position="306"/>
        <end position="326"/>
    </location>
</feature>
<feature type="transmembrane region" description="Helical" evidence="1">
    <location>
        <begin position="380"/>
        <end position="400"/>
    </location>
</feature>
<comment type="function">
    <text>Beta subunit of the biotin-dependent malonate decarboxylase multienzyme complex (EC 7.2.4.4). Acts as an integral membrane-bound carboxybiotin protein decarboxylase by releasing the carboxyl group of the carboxylated biotin carrier MADF. The free energy of the decarboxylation reaction is used to pump Na(+) out of the cell.</text>
</comment>
<comment type="catalytic activity">
    <reaction evidence="2">
        <text>N(6)-carboxybiotinyl-L-lysyl-[protein] + n Na(+)(in) + H(+) = N(6)-biotinyl-L-lysyl-[protein] + n Na(+)(out) + CO2</text>
        <dbReference type="Rhea" id="RHEA:43336"/>
        <dbReference type="Rhea" id="RHEA-COMP:10505"/>
        <dbReference type="Rhea" id="RHEA-COMP:10506"/>
        <dbReference type="ChEBI" id="CHEBI:15378"/>
        <dbReference type="ChEBI" id="CHEBI:16526"/>
        <dbReference type="ChEBI" id="CHEBI:29101"/>
        <dbReference type="ChEBI" id="CHEBI:83144"/>
        <dbReference type="ChEBI" id="CHEBI:83145"/>
        <dbReference type="EC" id="7.2.4.1"/>
    </reaction>
</comment>
<comment type="subcellular location">
    <subcellularLocation>
        <location evidence="3">Cell membrane</location>
        <topology evidence="3">Multi-pass membrane protein</topology>
    </subcellularLocation>
</comment>
<organism>
    <name type="scientific">Malonomonas rubra</name>
    <dbReference type="NCBI Taxonomy" id="57040"/>
    <lineage>
        <taxon>Bacteria</taxon>
        <taxon>Pseudomonadati</taxon>
        <taxon>Thermodesulfobacteriota</taxon>
        <taxon>Desulfuromonadia</taxon>
        <taxon>Desulfuromonadales</taxon>
        <taxon>Geopsychrobacteraceae</taxon>
        <taxon>Malonomonas</taxon>
    </lineage>
</organism>
<sequence length="401" mass="43024">MEQLMSLFPAISTLFTQDPVISITRIALIIFGFFLSYFGFKRTLEPLIMVPMGLGMIAINAGVLFLEAGVVGTIHLDPLVSEPSVLVNLMQVNWLQPVYNFTFSNGLIACIVFFGIGAMSDISFILIRPWASIIVALFAEMGTFATLIIGIKMGLLPNEAAAVATIGGADGPMVLFASLILAKDLFVPIAIIAYLYLSLTYAGYPYLIKLLVPKKYRGLEVEMDFPEVSQRSKFVFSVLACMLLCLLLPVASPLILSFFLGIAIKEAQIEPFQNLLETTLTYGSTLFLGLLLGALCEAKTILDPKISLIVVLGITALLISGIGGVLGGWIVYWFSKGKFNPVIGIAGVSCLPTTAKIAQKTVTEENPYAVILPLAMGAGVCGLIVSAIATGVFISTLFLLN</sequence>